<sequence>MYSSGIDIVDVLRIKKLHERFGERFLHKIYTKGELEYAFSTKEPYLRLAARFAAKEAAAKALGTGIGKVNFKDIEVVLGTDGPELIFHGYAAKIFQEKGFTGKSLSLSHEKKVAVAICVMWRD</sequence>
<dbReference type="EC" id="2.7.8.7" evidence="1"/>
<dbReference type="EMBL" id="CP000141">
    <property type="protein sequence ID" value="ABB15731.1"/>
    <property type="molecule type" value="Genomic_DNA"/>
</dbReference>
<dbReference type="RefSeq" id="WP_011343595.1">
    <property type="nucleotide sequence ID" value="NC_007503.1"/>
</dbReference>
<dbReference type="SMR" id="Q3AEB5"/>
<dbReference type="FunCoup" id="Q3AEB5">
    <property type="interactions" value="111"/>
</dbReference>
<dbReference type="STRING" id="246194.CHY_0664"/>
<dbReference type="KEGG" id="chy:CHY_0664"/>
<dbReference type="eggNOG" id="COG0736">
    <property type="taxonomic scope" value="Bacteria"/>
</dbReference>
<dbReference type="HOGENOM" id="CLU_089696_0_2_9"/>
<dbReference type="InParanoid" id="Q3AEB5"/>
<dbReference type="OrthoDB" id="517356at2"/>
<dbReference type="Proteomes" id="UP000002706">
    <property type="component" value="Chromosome"/>
</dbReference>
<dbReference type="GO" id="GO:0005737">
    <property type="term" value="C:cytoplasm"/>
    <property type="evidence" value="ECO:0007669"/>
    <property type="project" value="UniProtKB-SubCell"/>
</dbReference>
<dbReference type="GO" id="GO:0008897">
    <property type="term" value="F:holo-[acyl-carrier-protein] synthase activity"/>
    <property type="evidence" value="ECO:0007669"/>
    <property type="project" value="UniProtKB-UniRule"/>
</dbReference>
<dbReference type="GO" id="GO:0000287">
    <property type="term" value="F:magnesium ion binding"/>
    <property type="evidence" value="ECO:0007669"/>
    <property type="project" value="UniProtKB-UniRule"/>
</dbReference>
<dbReference type="GO" id="GO:0006633">
    <property type="term" value="P:fatty acid biosynthetic process"/>
    <property type="evidence" value="ECO:0007669"/>
    <property type="project" value="UniProtKB-UniRule"/>
</dbReference>
<dbReference type="Gene3D" id="3.90.470.20">
    <property type="entry name" value="4'-phosphopantetheinyl transferase domain"/>
    <property type="match status" value="1"/>
</dbReference>
<dbReference type="HAMAP" id="MF_00101">
    <property type="entry name" value="AcpS"/>
    <property type="match status" value="1"/>
</dbReference>
<dbReference type="InterPro" id="IPR008278">
    <property type="entry name" value="4-PPantetheinyl_Trfase_dom"/>
</dbReference>
<dbReference type="InterPro" id="IPR037143">
    <property type="entry name" value="4-PPantetheinyl_Trfase_dom_sf"/>
</dbReference>
<dbReference type="InterPro" id="IPR002582">
    <property type="entry name" value="ACPS"/>
</dbReference>
<dbReference type="InterPro" id="IPR004568">
    <property type="entry name" value="Ppantetheine-prot_Trfase_dom"/>
</dbReference>
<dbReference type="NCBIfam" id="TIGR00516">
    <property type="entry name" value="acpS"/>
    <property type="match status" value="1"/>
</dbReference>
<dbReference type="NCBIfam" id="TIGR00556">
    <property type="entry name" value="pantethn_trn"/>
    <property type="match status" value="1"/>
</dbReference>
<dbReference type="Pfam" id="PF01648">
    <property type="entry name" value="ACPS"/>
    <property type="match status" value="1"/>
</dbReference>
<dbReference type="SUPFAM" id="SSF56214">
    <property type="entry name" value="4'-phosphopantetheinyl transferase"/>
    <property type="match status" value="1"/>
</dbReference>
<gene>
    <name evidence="1" type="primary">acpS</name>
    <name type="ordered locus">CHY_0664</name>
</gene>
<comment type="function">
    <text evidence="1">Transfers the 4'-phosphopantetheine moiety from coenzyme A to a Ser of acyl-carrier-protein.</text>
</comment>
<comment type="catalytic activity">
    <reaction evidence="1">
        <text>apo-[ACP] + CoA = holo-[ACP] + adenosine 3',5'-bisphosphate + H(+)</text>
        <dbReference type="Rhea" id="RHEA:12068"/>
        <dbReference type="Rhea" id="RHEA-COMP:9685"/>
        <dbReference type="Rhea" id="RHEA-COMP:9690"/>
        <dbReference type="ChEBI" id="CHEBI:15378"/>
        <dbReference type="ChEBI" id="CHEBI:29999"/>
        <dbReference type="ChEBI" id="CHEBI:57287"/>
        <dbReference type="ChEBI" id="CHEBI:58343"/>
        <dbReference type="ChEBI" id="CHEBI:64479"/>
        <dbReference type="EC" id="2.7.8.7"/>
    </reaction>
</comment>
<comment type="cofactor">
    <cofactor evidence="1">
        <name>Mg(2+)</name>
        <dbReference type="ChEBI" id="CHEBI:18420"/>
    </cofactor>
</comment>
<comment type="subcellular location">
    <subcellularLocation>
        <location evidence="1">Cytoplasm</location>
    </subcellularLocation>
</comment>
<comment type="similarity">
    <text evidence="1">Belongs to the P-Pant transferase superfamily. AcpS family.</text>
</comment>
<protein>
    <recommendedName>
        <fullName evidence="1">Holo-[acyl-carrier-protein] synthase</fullName>
        <shortName evidence="1">Holo-ACP synthase</shortName>
        <ecNumber evidence="1">2.7.8.7</ecNumber>
    </recommendedName>
    <alternativeName>
        <fullName evidence="1">4'-phosphopantetheinyl transferase AcpS</fullName>
    </alternativeName>
</protein>
<keyword id="KW-0963">Cytoplasm</keyword>
<keyword id="KW-0275">Fatty acid biosynthesis</keyword>
<keyword id="KW-0276">Fatty acid metabolism</keyword>
<keyword id="KW-0444">Lipid biosynthesis</keyword>
<keyword id="KW-0443">Lipid metabolism</keyword>
<keyword id="KW-0460">Magnesium</keyword>
<keyword id="KW-0479">Metal-binding</keyword>
<keyword id="KW-1185">Reference proteome</keyword>
<keyword id="KW-0808">Transferase</keyword>
<accession>Q3AEB5</accession>
<name>ACPS_CARHZ</name>
<reference key="1">
    <citation type="journal article" date="2005" name="PLoS Genet.">
        <title>Life in hot carbon monoxide: the complete genome sequence of Carboxydothermus hydrogenoformans Z-2901.</title>
        <authorList>
            <person name="Wu M."/>
            <person name="Ren Q."/>
            <person name="Durkin A.S."/>
            <person name="Daugherty S.C."/>
            <person name="Brinkac L.M."/>
            <person name="Dodson R.J."/>
            <person name="Madupu R."/>
            <person name="Sullivan S.A."/>
            <person name="Kolonay J.F."/>
            <person name="Nelson W.C."/>
            <person name="Tallon L.J."/>
            <person name="Jones K.M."/>
            <person name="Ulrich L.E."/>
            <person name="Gonzalez J.M."/>
            <person name="Zhulin I.B."/>
            <person name="Robb F.T."/>
            <person name="Eisen J.A."/>
        </authorList>
    </citation>
    <scope>NUCLEOTIDE SEQUENCE [LARGE SCALE GENOMIC DNA]</scope>
    <source>
        <strain>ATCC BAA-161 / DSM 6008 / Z-2901</strain>
    </source>
</reference>
<evidence type="ECO:0000255" key="1">
    <source>
        <dbReference type="HAMAP-Rule" id="MF_00101"/>
    </source>
</evidence>
<proteinExistence type="inferred from homology"/>
<feature type="chain" id="PRO_0000228277" description="Holo-[acyl-carrier-protein] synthase">
    <location>
        <begin position="1"/>
        <end position="123"/>
    </location>
</feature>
<feature type="binding site" evidence="1">
    <location>
        <position position="7"/>
    </location>
    <ligand>
        <name>Mg(2+)</name>
        <dbReference type="ChEBI" id="CHEBI:18420"/>
    </ligand>
</feature>
<feature type="binding site" evidence="1">
    <location>
        <position position="56"/>
    </location>
    <ligand>
        <name>Mg(2+)</name>
        <dbReference type="ChEBI" id="CHEBI:18420"/>
    </ligand>
</feature>
<organism>
    <name type="scientific">Carboxydothermus hydrogenoformans (strain ATCC BAA-161 / DSM 6008 / Z-2901)</name>
    <dbReference type="NCBI Taxonomy" id="246194"/>
    <lineage>
        <taxon>Bacteria</taxon>
        <taxon>Bacillati</taxon>
        <taxon>Bacillota</taxon>
        <taxon>Clostridia</taxon>
        <taxon>Thermoanaerobacterales</taxon>
        <taxon>Thermoanaerobacteraceae</taxon>
        <taxon>Carboxydothermus</taxon>
    </lineage>
</organism>